<keyword id="KW-0007">Acetylation</keyword>
<keyword id="KW-0010">Activator</keyword>
<keyword id="KW-0963">Cytoplasm</keyword>
<keyword id="KW-0456">Lyase</keyword>
<keyword id="KW-0539">Nucleus</keyword>
<keyword id="KW-1185">Reference proteome</keyword>
<keyword id="KW-0783">Tetrahydrobiopterin biosynthesis</keyword>
<keyword id="KW-0804">Transcription</keyword>
<keyword id="KW-0805">Transcription regulation</keyword>
<organism>
    <name type="scientific">Gallus gallus</name>
    <name type="common">Chicken</name>
    <dbReference type="NCBI Taxonomy" id="9031"/>
    <lineage>
        <taxon>Eukaryota</taxon>
        <taxon>Metazoa</taxon>
        <taxon>Chordata</taxon>
        <taxon>Craniata</taxon>
        <taxon>Vertebrata</taxon>
        <taxon>Euteleostomi</taxon>
        <taxon>Archelosauria</taxon>
        <taxon>Archosauria</taxon>
        <taxon>Dinosauria</taxon>
        <taxon>Saurischia</taxon>
        <taxon>Theropoda</taxon>
        <taxon>Coelurosauria</taxon>
        <taxon>Aves</taxon>
        <taxon>Neognathae</taxon>
        <taxon>Galloanserae</taxon>
        <taxon>Galliformes</taxon>
        <taxon>Phasianidae</taxon>
        <taxon>Phasianinae</taxon>
        <taxon>Gallus</taxon>
    </lineage>
</organism>
<sequence length="104" mass="11998">MAGKAHRLNAEEREQLLPNLRAVGWNEVEGRDAIFKEFHFKDFNRAFGFMTRVALQAEKLDHHPEWFNVYNKVHITLSTHECTGLSERDINLASFIEQVAASLS</sequence>
<accession>O73930</accession>
<protein>
    <recommendedName>
        <fullName>Pterin-4-alpha-carbinolamine dehydratase</fullName>
        <shortName>PHS</shortName>
        <ecNumber evidence="3">4.2.1.96</ecNumber>
    </recommendedName>
    <alternativeName>
        <fullName>4-alpha-hydroxy-tetrahydropterin dehydratase</fullName>
    </alternativeName>
    <alternativeName>
        <fullName>Dimerization cofactor of hepatocyte nuclear factor 1-alpha</fullName>
        <shortName>DCoH</shortName>
        <shortName>Dimerization cofactor of HNF1</shortName>
        <shortName>cDcoH</shortName>
    </alternativeName>
    <alternativeName>
        <fullName>Phenylalanine hydroxylase-stimulating protein</fullName>
    </alternativeName>
    <alternativeName>
        <fullName>Pterin carbinolamine dehydratase</fullName>
        <shortName>PCD</shortName>
    </alternativeName>
</protein>
<feature type="initiator methionine" description="Removed" evidence="1">
    <location>
        <position position="1"/>
    </location>
</feature>
<feature type="chain" id="PRO_0000063055" description="Pterin-4-alpha-carbinolamine dehydratase">
    <location>
        <begin position="2"/>
        <end position="104"/>
    </location>
</feature>
<feature type="binding site" evidence="1">
    <location>
        <begin position="61"/>
        <end position="63"/>
    </location>
    <ligand>
        <name>substrate</name>
    </ligand>
</feature>
<feature type="binding site" evidence="1">
    <location>
        <begin position="78"/>
        <end position="81"/>
    </location>
    <ligand>
        <name>substrate</name>
    </ligand>
</feature>
<feature type="modified residue" description="N-acetylalanine" evidence="1">
    <location>
        <position position="2"/>
    </location>
</feature>
<name>PHS_CHICK</name>
<gene>
    <name type="primary">PCBD1</name>
    <name type="synonym">DCOH</name>
    <name type="synonym">PCBD</name>
</gene>
<dbReference type="EC" id="4.2.1.96" evidence="3"/>
<dbReference type="EMBL" id="AJ005158">
    <property type="protein sequence ID" value="CAA06395.1"/>
    <property type="molecule type" value="Genomic_DNA"/>
</dbReference>
<dbReference type="EMBL" id="AJ005157">
    <property type="protein sequence ID" value="CAA06394.1"/>
    <property type="molecule type" value="mRNA"/>
</dbReference>
<dbReference type="RefSeq" id="NP_990236.1">
    <property type="nucleotide sequence ID" value="NM_204905.2"/>
</dbReference>
<dbReference type="SMR" id="O73930"/>
<dbReference type="FunCoup" id="O73930">
    <property type="interactions" value="1120"/>
</dbReference>
<dbReference type="STRING" id="9031.ENSGALP00000043457"/>
<dbReference type="PaxDb" id="9031-ENSGALP00000043457"/>
<dbReference type="Ensembl" id="ENSGALT00000151816">
    <property type="protein sequence ID" value="ENSGALP00000080362"/>
    <property type="gene ID" value="ENSGALG00000027835"/>
</dbReference>
<dbReference type="Ensembl" id="ENSGALT00010049148.1">
    <property type="protein sequence ID" value="ENSGALP00010029058.1"/>
    <property type="gene ID" value="ENSGALG00010020346.1"/>
</dbReference>
<dbReference type="GeneID" id="395729"/>
<dbReference type="KEGG" id="gga:395729"/>
<dbReference type="CTD" id="5092"/>
<dbReference type="VEuPathDB" id="HostDB:geneid_395729"/>
<dbReference type="eggNOG" id="KOG4073">
    <property type="taxonomic scope" value="Eukaryota"/>
</dbReference>
<dbReference type="GeneTree" id="ENSGT00390000007221"/>
<dbReference type="HOGENOM" id="CLU_081974_3_2_1"/>
<dbReference type="InParanoid" id="O73930"/>
<dbReference type="OMA" id="WAEKWNH"/>
<dbReference type="OrthoDB" id="277398at2759"/>
<dbReference type="PhylomeDB" id="O73930"/>
<dbReference type="PRO" id="PR:O73930"/>
<dbReference type="Proteomes" id="UP000000539">
    <property type="component" value="Chromosome 6"/>
</dbReference>
<dbReference type="GO" id="GO:0005737">
    <property type="term" value="C:cytoplasm"/>
    <property type="evidence" value="ECO:0007669"/>
    <property type="project" value="UniProtKB-SubCell"/>
</dbReference>
<dbReference type="GO" id="GO:0005634">
    <property type="term" value="C:nucleus"/>
    <property type="evidence" value="ECO:0007669"/>
    <property type="project" value="UniProtKB-SubCell"/>
</dbReference>
<dbReference type="GO" id="GO:0008124">
    <property type="term" value="F:4-alpha-hydroxytetrahydrobiopterin dehydratase activity"/>
    <property type="evidence" value="ECO:0007669"/>
    <property type="project" value="UniProtKB-EC"/>
</dbReference>
<dbReference type="GO" id="GO:0006729">
    <property type="term" value="P:tetrahydrobiopterin biosynthetic process"/>
    <property type="evidence" value="ECO:0007669"/>
    <property type="project" value="UniProtKB-KW"/>
</dbReference>
<dbReference type="CDD" id="cd00914">
    <property type="entry name" value="PCD_DCoH_subfamily_b"/>
    <property type="match status" value="1"/>
</dbReference>
<dbReference type="FunFam" id="3.30.1360.20:FF:000001">
    <property type="entry name" value="Pterin-4-alpha-carbinolamine dehydratase 2"/>
    <property type="match status" value="1"/>
</dbReference>
<dbReference type="Gene3D" id="3.30.1360.20">
    <property type="entry name" value="Transcriptional coactivator/pterin dehydratase"/>
    <property type="match status" value="1"/>
</dbReference>
<dbReference type="HAMAP" id="MF_00434">
    <property type="entry name" value="Pterin_4_alpha"/>
    <property type="match status" value="1"/>
</dbReference>
<dbReference type="InterPro" id="IPR036428">
    <property type="entry name" value="PCD_sf"/>
</dbReference>
<dbReference type="InterPro" id="IPR001533">
    <property type="entry name" value="Pterin_deHydtase"/>
</dbReference>
<dbReference type="NCBIfam" id="NF002018">
    <property type="entry name" value="PRK00823.1-3"/>
    <property type="match status" value="1"/>
</dbReference>
<dbReference type="NCBIfam" id="NF002020">
    <property type="entry name" value="PRK00823.1-5"/>
    <property type="match status" value="1"/>
</dbReference>
<dbReference type="PANTHER" id="PTHR12599">
    <property type="entry name" value="PTERIN-4-ALPHA-CARBINOLAMINE DEHYDRATASE"/>
    <property type="match status" value="1"/>
</dbReference>
<dbReference type="PANTHER" id="PTHR12599:SF13">
    <property type="entry name" value="PTERIN-4-ALPHA-CARBINOLAMINE DEHYDRATASE"/>
    <property type="match status" value="1"/>
</dbReference>
<dbReference type="Pfam" id="PF01329">
    <property type="entry name" value="Pterin_4a"/>
    <property type="match status" value="1"/>
</dbReference>
<dbReference type="SUPFAM" id="SSF55248">
    <property type="entry name" value="PCD-like"/>
    <property type="match status" value="1"/>
</dbReference>
<comment type="function">
    <text evidence="2 3">Involved in tetrahydrobiopterin biosynthesis. Seems to both prevent the formation of 7-pterins and accelerate the formation of quinonoid-BH2. Coactivator for HNF1A-dependent transcription. Regulates the dimerization of homeodomain protein HNF1A and enhances its transcriptional activity (By similarity). Also acts as a coactivator for HNF1B-dependent transcription (By similarity).</text>
</comment>
<comment type="catalytic activity">
    <reaction evidence="3">
        <text>(4aS,6R)-4a-hydroxy-L-erythro-5,6,7,8-tetrahydrobiopterin = (6R)-L-erythro-6,7-dihydrobiopterin + H2O</text>
        <dbReference type="Rhea" id="RHEA:11920"/>
        <dbReference type="ChEBI" id="CHEBI:15377"/>
        <dbReference type="ChEBI" id="CHEBI:15642"/>
        <dbReference type="ChEBI" id="CHEBI:43120"/>
        <dbReference type="EC" id="4.2.1.96"/>
    </reaction>
</comment>
<comment type="subunit">
    <text evidence="3">Homotetramer and homodimer.</text>
</comment>
<comment type="subcellular location">
    <subcellularLocation>
        <location evidence="3">Cytoplasm</location>
    </subcellularLocation>
    <subcellularLocation>
        <location evidence="3">Nucleus</location>
    </subcellularLocation>
</comment>
<comment type="tissue specificity">
    <text evidence="4">The major tissues expressing cDcoH are hypothalamus, kidney and liver.</text>
</comment>
<comment type="similarity">
    <text evidence="5">Belongs to the pterin-4-alpha-carbinolamine dehydratase family.</text>
</comment>
<proteinExistence type="evidence at transcript level"/>
<reference key="1">
    <citation type="journal article" date="1998" name="Biol. Chem.">
        <title>Characterization of the chicken and rat DCoH gene domains using an improved ligation-mediated PCR method.</title>
        <authorList>
            <person name="Bossow S."/>
            <person name="Riepl S."/>
            <person name="Igo-Kemenes T."/>
        </authorList>
    </citation>
    <scope>NUCLEOTIDE SEQUENCE [GENOMIC DNA / MRNA]</scope>
</reference>
<reference key="2">
    <citation type="journal article" date="2001" name="Biochem. J.">
        <title>Differential expression of chicken dimerization cofactor of hepatocyte nuclear factor-1 (DcoH) and its novel counterpart, DcoHalpha.</title>
        <authorList>
            <person name="Kim H."/>
            <person name="You S."/>
            <person name="Foster L.K."/>
            <person name="Farris J."/>
            <person name="Choi Y.-J."/>
            <person name="Foster D.N."/>
        </authorList>
    </citation>
    <scope>TISSUE SPECIFICITY</scope>
</reference>
<evidence type="ECO:0000250" key="1"/>
<evidence type="ECO:0000250" key="2">
    <source>
        <dbReference type="UniProtKB" id="P61457"/>
    </source>
</evidence>
<evidence type="ECO:0000250" key="3">
    <source>
        <dbReference type="UniProtKB" id="P61459"/>
    </source>
</evidence>
<evidence type="ECO:0000269" key="4">
    <source>
    </source>
</evidence>
<evidence type="ECO:0000305" key="5"/>